<accession>Q8C0D0</accession>
<accession>Q5EBH7</accession>
<accession>Q9D331</accession>
<sequence length="338" mass="36348">MAAAEAEVVSPLIVDTAPDTSGTAEASVAASVAEAARTESQAPASKAALAAKLMSLSGVFAVHKPKGPTSAELLNRLKEKLLAEAGMPSPEWNKRQKQTLKVGHGGTLDSAAQGVLVVGIGRGTKMLTSMLSGSKRYITIGELGKATDTLDSTGKVTEEKPYDKITREDIEGILQKFTGNIMQVPPLYSALKKDGQRLSTLMKKGKVVEARPARPVTVHSISLLKFQPPFFTLDVECGGGFYIRSLVSDIGKELSSCASVLELTRTKQGPFTLAQHALPEDRWTIDDIEQSLERCTSLLPEELTFKKLKSDNSSDQVISCGYITLRDTKREDDAVKTL</sequence>
<dbReference type="EC" id="5.4.99.-" evidence="1"/>
<dbReference type="EC" id="5.4.99.25" evidence="1"/>
<dbReference type="EMBL" id="AK018525">
    <property type="protein sequence ID" value="BAB31254.1"/>
    <property type="molecule type" value="mRNA"/>
</dbReference>
<dbReference type="EMBL" id="AK031674">
    <property type="protein sequence ID" value="BAC27506.1"/>
    <property type="molecule type" value="mRNA"/>
</dbReference>
<dbReference type="EMBL" id="AK169221">
    <property type="protein sequence ID" value="BAE40991.1"/>
    <property type="molecule type" value="mRNA"/>
</dbReference>
<dbReference type="EMBL" id="BC089592">
    <property type="protein sequence ID" value="AAH89592.1"/>
    <property type="molecule type" value="mRNA"/>
</dbReference>
<dbReference type="CCDS" id="CCDS29926.1">
    <molecule id="Q8C0D0-1"/>
</dbReference>
<dbReference type="CCDS" id="CCDS29927.1">
    <molecule id="Q8C0D0-2"/>
</dbReference>
<dbReference type="RefSeq" id="NP_082391.1">
    <molecule id="Q8C0D0-1"/>
    <property type="nucleotide sequence ID" value="NM_028115.3"/>
</dbReference>
<dbReference type="RefSeq" id="NP_084115.2">
    <molecule id="Q8C0D0-2"/>
    <property type="nucleotide sequence ID" value="NM_029839.3"/>
</dbReference>
<dbReference type="SMR" id="Q8C0D0"/>
<dbReference type="FunCoup" id="Q8C0D0">
    <property type="interactions" value="2578"/>
</dbReference>
<dbReference type="STRING" id="10090.ENSMUSP00000026073"/>
<dbReference type="GlyGen" id="Q8C0D0">
    <property type="glycosylation" value="1 site"/>
</dbReference>
<dbReference type="iPTMnet" id="Q8C0D0"/>
<dbReference type="PhosphoSitePlus" id="Q8C0D0"/>
<dbReference type="PaxDb" id="10090-ENSMUSP00000026073"/>
<dbReference type="ProteomicsDB" id="258988">
    <molecule id="Q8C0D0-1"/>
</dbReference>
<dbReference type="ProteomicsDB" id="258989">
    <molecule id="Q8C0D0-2"/>
</dbReference>
<dbReference type="Pumba" id="Q8C0D0"/>
<dbReference type="Antibodypedia" id="31974">
    <property type="antibodies" value="126 antibodies from 23 providers"/>
</dbReference>
<dbReference type="DNASU" id="72133"/>
<dbReference type="Ensembl" id="ENSMUST00000026072.5">
    <molecule id="Q8C0D0-2"/>
    <property type="protein sequence ID" value="ENSMUSP00000026072.4"/>
    <property type="gene ID" value="ENSMUSG00000025086.14"/>
</dbReference>
<dbReference type="Ensembl" id="ENSMUST00000026073.14">
    <molecule id="Q8C0D0-1"/>
    <property type="protein sequence ID" value="ENSMUSP00000026073.7"/>
    <property type="gene ID" value="ENSMUSG00000025086.14"/>
</dbReference>
<dbReference type="GeneID" id="72133"/>
<dbReference type="KEGG" id="mmu:72133"/>
<dbReference type="UCSC" id="uc008iae.2">
    <molecule id="Q8C0D0-2"/>
    <property type="organism name" value="mouse"/>
</dbReference>
<dbReference type="UCSC" id="uc008iag.2">
    <molecule id="Q8C0D0-1"/>
    <property type="organism name" value="mouse"/>
</dbReference>
<dbReference type="AGR" id="MGI:1919383"/>
<dbReference type="CTD" id="142940"/>
<dbReference type="MGI" id="MGI:1919383">
    <property type="gene designation" value="Trub1"/>
</dbReference>
<dbReference type="VEuPathDB" id="HostDB:ENSMUSG00000025086"/>
<dbReference type="eggNOG" id="KOG2529">
    <property type="taxonomic scope" value="Eukaryota"/>
</dbReference>
<dbReference type="GeneTree" id="ENSGT00940000158962"/>
<dbReference type="HOGENOM" id="CLU_032087_1_0_1"/>
<dbReference type="InParanoid" id="Q8C0D0"/>
<dbReference type="OMA" id="VDKPSGF"/>
<dbReference type="OrthoDB" id="9995526at2759"/>
<dbReference type="PhylomeDB" id="Q8C0D0"/>
<dbReference type="TreeFam" id="TF320759"/>
<dbReference type="BioGRID-ORCS" id="72133">
    <property type="hits" value="1 hit in 76 CRISPR screens"/>
</dbReference>
<dbReference type="ChiTaRS" id="Trub1">
    <property type="organism name" value="mouse"/>
</dbReference>
<dbReference type="PRO" id="PR:Q8C0D0"/>
<dbReference type="Proteomes" id="UP000000589">
    <property type="component" value="Chromosome 19"/>
</dbReference>
<dbReference type="RNAct" id="Q8C0D0">
    <property type="molecule type" value="protein"/>
</dbReference>
<dbReference type="Bgee" id="ENSMUSG00000025086">
    <property type="expression patterns" value="Expressed in gastrula and 207 other cell types or tissues"/>
</dbReference>
<dbReference type="ExpressionAtlas" id="Q8C0D0">
    <property type="expression patterns" value="baseline and differential"/>
</dbReference>
<dbReference type="GO" id="GO:0005829">
    <property type="term" value="C:cytosol"/>
    <property type="evidence" value="ECO:0000250"/>
    <property type="project" value="UniProtKB"/>
</dbReference>
<dbReference type="GO" id="GO:0005634">
    <property type="term" value="C:nucleus"/>
    <property type="evidence" value="ECO:0000250"/>
    <property type="project" value="UniProtKB"/>
</dbReference>
<dbReference type="GO" id="GO:0070883">
    <property type="term" value="F:pre-miRNA binding"/>
    <property type="evidence" value="ECO:0000250"/>
    <property type="project" value="UniProtKB"/>
</dbReference>
<dbReference type="GO" id="GO:0009982">
    <property type="term" value="F:pseudouridine synthase activity"/>
    <property type="evidence" value="ECO:0000250"/>
    <property type="project" value="UniProtKB"/>
</dbReference>
<dbReference type="GO" id="GO:0160148">
    <property type="term" value="F:tRNA pseudouridine(55) synthase activity"/>
    <property type="evidence" value="ECO:0007669"/>
    <property type="project" value="RHEA"/>
</dbReference>
<dbReference type="GO" id="GO:0006397">
    <property type="term" value="P:mRNA processing"/>
    <property type="evidence" value="ECO:0007669"/>
    <property type="project" value="UniProtKB-KW"/>
</dbReference>
<dbReference type="GO" id="GO:1990481">
    <property type="term" value="P:mRNA pseudouridine synthesis"/>
    <property type="evidence" value="ECO:0000250"/>
    <property type="project" value="UniProtKB"/>
</dbReference>
<dbReference type="GO" id="GO:2000633">
    <property type="term" value="P:positive regulation of pre-miRNA processing"/>
    <property type="evidence" value="ECO:0000250"/>
    <property type="project" value="UniProtKB"/>
</dbReference>
<dbReference type="GO" id="GO:0006400">
    <property type="term" value="P:tRNA modification"/>
    <property type="evidence" value="ECO:0000250"/>
    <property type="project" value="UniProtKB"/>
</dbReference>
<dbReference type="FunFam" id="3.30.2350.10:FF:000013">
    <property type="entry name" value="TruB pseudouridine synthase family member 1"/>
    <property type="match status" value="1"/>
</dbReference>
<dbReference type="Gene3D" id="3.30.2350.10">
    <property type="entry name" value="Pseudouridine synthase"/>
    <property type="match status" value="1"/>
</dbReference>
<dbReference type="HAMAP" id="MF_01080">
    <property type="entry name" value="TruB_bact"/>
    <property type="match status" value="1"/>
</dbReference>
<dbReference type="InterPro" id="IPR020103">
    <property type="entry name" value="PsdUridine_synth_cat_dom_sf"/>
</dbReference>
<dbReference type="InterPro" id="IPR002501">
    <property type="entry name" value="PsdUridine_synth_N"/>
</dbReference>
<dbReference type="InterPro" id="IPR014780">
    <property type="entry name" value="tRNA_psdUridine_synth_TruB"/>
</dbReference>
<dbReference type="NCBIfam" id="TIGR00431">
    <property type="entry name" value="TruB"/>
    <property type="match status" value="1"/>
</dbReference>
<dbReference type="PANTHER" id="PTHR13767:SF2">
    <property type="entry name" value="PSEUDOURIDYLATE SYNTHASE TRUB1"/>
    <property type="match status" value="1"/>
</dbReference>
<dbReference type="PANTHER" id="PTHR13767">
    <property type="entry name" value="TRNA-PSEUDOURIDINE SYNTHASE"/>
    <property type="match status" value="1"/>
</dbReference>
<dbReference type="Pfam" id="PF01509">
    <property type="entry name" value="TruB_N"/>
    <property type="match status" value="1"/>
</dbReference>
<dbReference type="SUPFAM" id="SSF55120">
    <property type="entry name" value="Pseudouridine synthase"/>
    <property type="match status" value="1"/>
</dbReference>
<feature type="initiator methionine" description="Removed" evidence="1">
    <location>
        <position position="1"/>
    </location>
</feature>
<feature type="chain" id="PRO_0000252088" description="Pseudouridylate synthase TRUB1">
    <location>
        <begin position="2"/>
        <end position="338"/>
    </location>
</feature>
<feature type="active site" description="Nucleophile" evidence="1">
    <location>
        <position position="109"/>
    </location>
</feature>
<feature type="modified residue" description="N-acetylalanine" evidence="1">
    <location>
        <position position="2"/>
    </location>
</feature>
<feature type="splice variant" id="VSP_020860" description="In isoform 2." evidence="2">
    <original>DVECGGGFYIRSLV</original>
    <variation>GFLCIALAVLELTL</variation>
    <location>
        <begin position="234"/>
        <end position="247"/>
    </location>
</feature>
<feature type="splice variant" id="VSP_020861" description="In isoform 2." evidence="2">
    <location>
        <begin position="248"/>
        <end position="338"/>
    </location>
</feature>
<feature type="sequence conflict" description="In Ref. 1; BAB31254." evidence="3" ref="1">
    <original>F</original>
    <variation>L</variation>
    <location>
        <position position="60"/>
    </location>
</feature>
<feature type="sequence conflict" description="In Ref. 2; AAH89592." evidence="3" ref="2">
    <original>L</original>
    <variation>P</variation>
    <location>
        <position position="74"/>
    </location>
</feature>
<gene>
    <name evidence="4" type="primary">Trub1</name>
</gene>
<evidence type="ECO:0000250" key="1">
    <source>
        <dbReference type="UniProtKB" id="Q8WWH5"/>
    </source>
</evidence>
<evidence type="ECO:0000303" key="2">
    <source>
    </source>
</evidence>
<evidence type="ECO:0000305" key="3"/>
<evidence type="ECO:0000312" key="4">
    <source>
        <dbReference type="MGI" id="MGI:1919383"/>
    </source>
</evidence>
<reference key="1">
    <citation type="journal article" date="2005" name="Science">
        <title>The transcriptional landscape of the mammalian genome.</title>
        <authorList>
            <person name="Carninci P."/>
            <person name="Kasukawa T."/>
            <person name="Katayama S."/>
            <person name="Gough J."/>
            <person name="Frith M.C."/>
            <person name="Maeda N."/>
            <person name="Oyama R."/>
            <person name="Ravasi T."/>
            <person name="Lenhard B."/>
            <person name="Wells C."/>
            <person name="Kodzius R."/>
            <person name="Shimokawa K."/>
            <person name="Bajic V.B."/>
            <person name="Brenner S.E."/>
            <person name="Batalov S."/>
            <person name="Forrest A.R."/>
            <person name="Zavolan M."/>
            <person name="Davis M.J."/>
            <person name="Wilming L.G."/>
            <person name="Aidinis V."/>
            <person name="Allen J.E."/>
            <person name="Ambesi-Impiombato A."/>
            <person name="Apweiler R."/>
            <person name="Aturaliya R.N."/>
            <person name="Bailey T.L."/>
            <person name="Bansal M."/>
            <person name="Baxter L."/>
            <person name="Beisel K.W."/>
            <person name="Bersano T."/>
            <person name="Bono H."/>
            <person name="Chalk A.M."/>
            <person name="Chiu K.P."/>
            <person name="Choudhary V."/>
            <person name="Christoffels A."/>
            <person name="Clutterbuck D.R."/>
            <person name="Crowe M.L."/>
            <person name="Dalla E."/>
            <person name="Dalrymple B.P."/>
            <person name="de Bono B."/>
            <person name="Della Gatta G."/>
            <person name="di Bernardo D."/>
            <person name="Down T."/>
            <person name="Engstrom P."/>
            <person name="Fagiolini M."/>
            <person name="Faulkner G."/>
            <person name="Fletcher C.F."/>
            <person name="Fukushima T."/>
            <person name="Furuno M."/>
            <person name="Futaki S."/>
            <person name="Gariboldi M."/>
            <person name="Georgii-Hemming P."/>
            <person name="Gingeras T.R."/>
            <person name="Gojobori T."/>
            <person name="Green R.E."/>
            <person name="Gustincich S."/>
            <person name="Harbers M."/>
            <person name="Hayashi Y."/>
            <person name="Hensch T.K."/>
            <person name="Hirokawa N."/>
            <person name="Hill D."/>
            <person name="Huminiecki L."/>
            <person name="Iacono M."/>
            <person name="Ikeo K."/>
            <person name="Iwama A."/>
            <person name="Ishikawa T."/>
            <person name="Jakt M."/>
            <person name="Kanapin A."/>
            <person name="Katoh M."/>
            <person name="Kawasawa Y."/>
            <person name="Kelso J."/>
            <person name="Kitamura H."/>
            <person name="Kitano H."/>
            <person name="Kollias G."/>
            <person name="Krishnan S.P."/>
            <person name="Kruger A."/>
            <person name="Kummerfeld S.K."/>
            <person name="Kurochkin I.V."/>
            <person name="Lareau L.F."/>
            <person name="Lazarevic D."/>
            <person name="Lipovich L."/>
            <person name="Liu J."/>
            <person name="Liuni S."/>
            <person name="McWilliam S."/>
            <person name="Madan Babu M."/>
            <person name="Madera M."/>
            <person name="Marchionni L."/>
            <person name="Matsuda H."/>
            <person name="Matsuzawa S."/>
            <person name="Miki H."/>
            <person name="Mignone F."/>
            <person name="Miyake S."/>
            <person name="Morris K."/>
            <person name="Mottagui-Tabar S."/>
            <person name="Mulder N."/>
            <person name="Nakano N."/>
            <person name="Nakauchi H."/>
            <person name="Ng P."/>
            <person name="Nilsson R."/>
            <person name="Nishiguchi S."/>
            <person name="Nishikawa S."/>
            <person name="Nori F."/>
            <person name="Ohara O."/>
            <person name="Okazaki Y."/>
            <person name="Orlando V."/>
            <person name="Pang K.C."/>
            <person name="Pavan W.J."/>
            <person name="Pavesi G."/>
            <person name="Pesole G."/>
            <person name="Petrovsky N."/>
            <person name="Piazza S."/>
            <person name="Reed J."/>
            <person name="Reid J.F."/>
            <person name="Ring B.Z."/>
            <person name="Ringwald M."/>
            <person name="Rost B."/>
            <person name="Ruan Y."/>
            <person name="Salzberg S.L."/>
            <person name="Sandelin A."/>
            <person name="Schneider C."/>
            <person name="Schoenbach C."/>
            <person name="Sekiguchi K."/>
            <person name="Semple C.A."/>
            <person name="Seno S."/>
            <person name="Sessa L."/>
            <person name="Sheng Y."/>
            <person name="Shibata Y."/>
            <person name="Shimada H."/>
            <person name="Shimada K."/>
            <person name="Silva D."/>
            <person name="Sinclair B."/>
            <person name="Sperling S."/>
            <person name="Stupka E."/>
            <person name="Sugiura K."/>
            <person name="Sultana R."/>
            <person name="Takenaka Y."/>
            <person name="Taki K."/>
            <person name="Tammoja K."/>
            <person name="Tan S.L."/>
            <person name="Tang S."/>
            <person name="Taylor M.S."/>
            <person name="Tegner J."/>
            <person name="Teichmann S.A."/>
            <person name="Ueda H.R."/>
            <person name="van Nimwegen E."/>
            <person name="Verardo R."/>
            <person name="Wei C.L."/>
            <person name="Yagi K."/>
            <person name="Yamanishi H."/>
            <person name="Zabarovsky E."/>
            <person name="Zhu S."/>
            <person name="Zimmer A."/>
            <person name="Hide W."/>
            <person name="Bult C."/>
            <person name="Grimmond S.M."/>
            <person name="Teasdale R.D."/>
            <person name="Liu E.T."/>
            <person name="Brusic V."/>
            <person name="Quackenbush J."/>
            <person name="Wahlestedt C."/>
            <person name="Mattick J.S."/>
            <person name="Hume D.A."/>
            <person name="Kai C."/>
            <person name="Sasaki D."/>
            <person name="Tomaru Y."/>
            <person name="Fukuda S."/>
            <person name="Kanamori-Katayama M."/>
            <person name="Suzuki M."/>
            <person name="Aoki J."/>
            <person name="Arakawa T."/>
            <person name="Iida J."/>
            <person name="Imamura K."/>
            <person name="Itoh M."/>
            <person name="Kato T."/>
            <person name="Kawaji H."/>
            <person name="Kawagashira N."/>
            <person name="Kawashima T."/>
            <person name="Kojima M."/>
            <person name="Kondo S."/>
            <person name="Konno H."/>
            <person name="Nakano K."/>
            <person name="Ninomiya N."/>
            <person name="Nishio T."/>
            <person name="Okada M."/>
            <person name="Plessy C."/>
            <person name="Shibata K."/>
            <person name="Shiraki T."/>
            <person name="Suzuki S."/>
            <person name="Tagami M."/>
            <person name="Waki K."/>
            <person name="Watahiki A."/>
            <person name="Okamura-Oho Y."/>
            <person name="Suzuki H."/>
            <person name="Kawai J."/>
            <person name="Hayashizaki Y."/>
        </authorList>
    </citation>
    <scope>NUCLEOTIDE SEQUENCE [LARGE SCALE MRNA] (ISOFORMS 1 AND 2)</scope>
    <source>
        <strain>C57BL/6J</strain>
        <tissue>Colon</tissue>
        <tissue>Liver</tissue>
        <tissue>Testis</tissue>
    </source>
</reference>
<reference key="2">
    <citation type="journal article" date="2004" name="Genome Res.">
        <title>The status, quality, and expansion of the NIH full-length cDNA project: the Mammalian Gene Collection (MGC).</title>
        <authorList>
            <consortium name="The MGC Project Team"/>
        </authorList>
    </citation>
    <scope>NUCLEOTIDE SEQUENCE [LARGE SCALE MRNA] (ISOFORM 1)</scope>
    <source>
        <tissue>Heart</tissue>
    </source>
</reference>
<reference key="3">
    <citation type="journal article" date="2010" name="Cell">
        <title>A tissue-specific atlas of mouse protein phosphorylation and expression.</title>
        <authorList>
            <person name="Huttlin E.L."/>
            <person name="Jedrychowski M.P."/>
            <person name="Elias J.E."/>
            <person name="Goswami T."/>
            <person name="Rad R."/>
            <person name="Beausoleil S.A."/>
            <person name="Villen J."/>
            <person name="Haas W."/>
            <person name="Sowa M.E."/>
            <person name="Gygi S.P."/>
        </authorList>
    </citation>
    <scope>IDENTIFICATION BY MASS SPECTROMETRY [LARGE SCALE ANALYSIS]</scope>
    <source>
        <tissue>Spleen</tissue>
    </source>
</reference>
<proteinExistence type="evidence at protein level"/>
<organism>
    <name type="scientific">Mus musculus</name>
    <name type="common">Mouse</name>
    <dbReference type="NCBI Taxonomy" id="10090"/>
    <lineage>
        <taxon>Eukaryota</taxon>
        <taxon>Metazoa</taxon>
        <taxon>Chordata</taxon>
        <taxon>Craniata</taxon>
        <taxon>Vertebrata</taxon>
        <taxon>Euteleostomi</taxon>
        <taxon>Mammalia</taxon>
        <taxon>Eutheria</taxon>
        <taxon>Euarchontoglires</taxon>
        <taxon>Glires</taxon>
        <taxon>Rodentia</taxon>
        <taxon>Myomorpha</taxon>
        <taxon>Muroidea</taxon>
        <taxon>Muridae</taxon>
        <taxon>Murinae</taxon>
        <taxon>Mus</taxon>
        <taxon>Mus</taxon>
    </lineage>
</organism>
<keyword id="KW-0007">Acetylation</keyword>
<keyword id="KW-0025">Alternative splicing</keyword>
<keyword id="KW-0963">Cytoplasm</keyword>
<keyword id="KW-0413">Isomerase</keyword>
<keyword id="KW-0507">mRNA processing</keyword>
<keyword id="KW-0539">Nucleus</keyword>
<keyword id="KW-1185">Reference proteome</keyword>
<keyword id="KW-0819">tRNA processing</keyword>
<comment type="function">
    <text evidence="1">Pseudouridine synthase that catalyzes pseudouridylation of mRNAs and tRNAs. Mediates pseudouridylation of mRNAs with the consensus sequence 5'-GUUCNANNC-3', harboring a stem-loop structure. Constitutes the major pseudouridine synthase acting on mRNAs. Also catalyzes pseudouridylation of some tRNAs, including synthesis of pseudouridine(55) from uracil-55, in the psi GC loop of a subset of tRNAs. Promotes the processing of pri-let-7 microRNAs (pri-miRNAs) independently of its RNA pseudouridylate synthase activity. Acts by binding to the stem-loop structure on pri-let-7, preventing LIN28-binding (LIN28A and/or LIN28B), thereby enhancing the interaction between pri-let-7 and the microprocessor DGCR8, which mediates miRNA maturation.</text>
</comment>
<comment type="catalytic activity">
    <reaction evidence="1">
        <text>a uridine in mRNA = a pseudouridine in mRNA</text>
        <dbReference type="Rhea" id="RHEA:56644"/>
        <dbReference type="Rhea" id="RHEA-COMP:14658"/>
        <dbReference type="Rhea" id="RHEA-COMP:14659"/>
        <dbReference type="ChEBI" id="CHEBI:65314"/>
        <dbReference type="ChEBI" id="CHEBI:65315"/>
    </reaction>
</comment>
<comment type="catalytic activity">
    <reaction evidence="1">
        <text>a uridine in tRNA = a pseudouridine in tRNA</text>
        <dbReference type="Rhea" id="RHEA:54572"/>
        <dbReference type="Rhea" id="RHEA-COMP:13339"/>
        <dbReference type="Rhea" id="RHEA-COMP:13934"/>
        <dbReference type="ChEBI" id="CHEBI:65314"/>
        <dbReference type="ChEBI" id="CHEBI:65315"/>
    </reaction>
</comment>
<comment type="catalytic activity">
    <reaction evidence="1">
        <text>uridine(55) in tRNA = pseudouridine(55) in tRNA</text>
        <dbReference type="Rhea" id="RHEA:42532"/>
        <dbReference type="Rhea" id="RHEA-COMP:10101"/>
        <dbReference type="Rhea" id="RHEA-COMP:10102"/>
        <dbReference type="ChEBI" id="CHEBI:65314"/>
        <dbReference type="ChEBI" id="CHEBI:65315"/>
        <dbReference type="EC" id="5.4.99.25"/>
    </reaction>
    <physiologicalReaction direction="left-to-right" evidence="1">
        <dbReference type="Rhea" id="RHEA:42533"/>
    </physiologicalReaction>
</comment>
<comment type="subcellular location">
    <subcellularLocation>
        <location evidence="1">Nucleus</location>
    </subcellularLocation>
    <subcellularLocation>
        <location evidence="1">Cytoplasm</location>
        <location evidence="1">Cytosol</location>
    </subcellularLocation>
    <text evidence="1">Catalyzes pseudouridylation of mRNAs in the nucleus.</text>
</comment>
<comment type="alternative products">
    <event type="alternative splicing"/>
    <isoform>
        <id>Q8C0D0-1</id>
        <name>1</name>
        <sequence type="displayed"/>
    </isoform>
    <isoform>
        <id>Q8C0D0-2</id>
        <name>2</name>
        <sequence type="described" ref="VSP_020860 VSP_020861"/>
    </isoform>
</comment>
<comment type="similarity">
    <text evidence="3">Belongs to the pseudouridine synthase TruB family.</text>
</comment>
<protein>
    <recommendedName>
        <fullName evidence="3">Pseudouridylate synthase TRUB1</fullName>
        <ecNumber evidence="1">5.4.99.-</ecNumber>
    </recommendedName>
    <alternativeName>
        <fullName evidence="1">TruB pseudouridine synthase homolog 1</fullName>
    </alternativeName>
    <alternativeName>
        <fullName evidence="3">tRNA pseudouridine 55 synthase TRUB1</fullName>
        <shortName evidence="3">Psi55 synthase TRUB1</shortName>
        <ecNumber evidence="1">5.4.99.25</ecNumber>
    </alternativeName>
</protein>
<name>TRUB1_MOUSE</name>